<reference key="1">
    <citation type="journal article" date="2003" name="Proc. Natl. Acad. Sci. U.S.A.">
        <title>Complete genome sequence of Lactobacillus plantarum WCFS1.</title>
        <authorList>
            <person name="Kleerebezem M."/>
            <person name="Boekhorst J."/>
            <person name="van Kranenburg R."/>
            <person name="Molenaar D."/>
            <person name="Kuipers O.P."/>
            <person name="Leer R."/>
            <person name="Tarchini R."/>
            <person name="Peters S.A."/>
            <person name="Sandbrink H.M."/>
            <person name="Fiers M.W.E.J."/>
            <person name="Stiekema W."/>
            <person name="Klein Lankhorst R.M."/>
            <person name="Bron P.A."/>
            <person name="Hoffer S.M."/>
            <person name="Nierop Groot M.N."/>
            <person name="Kerkhoven R."/>
            <person name="De Vries M."/>
            <person name="Ursing B."/>
            <person name="De Vos W.M."/>
            <person name="Siezen R.J."/>
        </authorList>
    </citation>
    <scope>NUCLEOTIDE SEQUENCE [LARGE SCALE GENOMIC DNA]</scope>
    <source>
        <strain>ATCC BAA-793 / NCIMB 8826 / WCFS1</strain>
    </source>
</reference>
<reference key="2">
    <citation type="journal article" date="2012" name="J. Bacteriol.">
        <title>Complete resequencing and reannotation of the Lactobacillus plantarum WCFS1 genome.</title>
        <authorList>
            <person name="Siezen R.J."/>
            <person name="Francke C."/>
            <person name="Renckens B."/>
            <person name="Boekhorst J."/>
            <person name="Wels M."/>
            <person name="Kleerebezem M."/>
            <person name="van Hijum S.A."/>
        </authorList>
    </citation>
    <scope>NUCLEOTIDE SEQUENCE [LARGE SCALE GENOMIC DNA]</scope>
    <scope>GENOME REANNOTATION</scope>
    <source>
        <strain>ATCC BAA-793 / NCIMB 8826 / WCFS1</strain>
    </source>
</reference>
<gene>
    <name type="primary">ftsK</name>
    <name type="ordered locus">lp_2210</name>
</gene>
<feature type="chain" id="PRO_0000098265" description="DNA translocase FtsK">
    <location>
        <begin position="1"/>
        <end position="795"/>
    </location>
</feature>
<feature type="transmembrane region" description="Helical" evidence="2">
    <location>
        <begin position="32"/>
        <end position="52"/>
    </location>
</feature>
<feature type="transmembrane region" description="Helical" evidence="2">
    <location>
        <begin position="64"/>
        <end position="84"/>
    </location>
</feature>
<feature type="transmembrane region" description="Helical" evidence="2">
    <location>
        <begin position="94"/>
        <end position="114"/>
    </location>
</feature>
<feature type="transmembrane region" description="Helical" evidence="2">
    <location>
        <begin position="138"/>
        <end position="158"/>
    </location>
</feature>
<feature type="transmembrane region" description="Helical" evidence="2">
    <location>
        <begin position="160"/>
        <end position="180"/>
    </location>
</feature>
<feature type="topological domain" description="Cytoplasmic" evidence="2">
    <location>
        <begin position="181"/>
        <end position="795"/>
    </location>
</feature>
<feature type="domain" description="FtsK" evidence="3">
    <location>
        <begin position="448"/>
        <end position="644"/>
    </location>
</feature>
<feature type="region of interest" description="Disordered" evidence="4">
    <location>
        <begin position="1"/>
        <end position="21"/>
    </location>
</feature>
<feature type="region of interest" description="Disordered" evidence="4">
    <location>
        <begin position="231"/>
        <end position="298"/>
    </location>
</feature>
<feature type="region of interest" description="Disordered" evidence="4">
    <location>
        <begin position="701"/>
        <end position="722"/>
    </location>
</feature>
<feature type="region of interest" description="Disordered" evidence="4">
    <location>
        <begin position="762"/>
        <end position="795"/>
    </location>
</feature>
<feature type="compositionally biased region" description="Basic residues" evidence="4">
    <location>
        <begin position="1"/>
        <end position="20"/>
    </location>
</feature>
<feature type="compositionally biased region" description="Polar residues" evidence="4">
    <location>
        <begin position="231"/>
        <end position="272"/>
    </location>
</feature>
<feature type="binding site" evidence="3">
    <location>
        <begin position="468"/>
        <end position="473"/>
    </location>
    <ligand>
        <name>ATP</name>
        <dbReference type="ChEBI" id="CHEBI:30616"/>
    </ligand>
</feature>
<proteinExistence type="inferred from homology"/>
<accession>Q88V72</accession>
<accession>F9UQD5</accession>
<comment type="function">
    <text evidence="1">Essential cell division protein that coordinates cell division and chromosome segregation. The N-terminus is involved in assembly of the cell-division machinery. The C-terminus functions as a DNA motor that moves dsDNA in an ATP-dependent manner towards the dif recombination site, which is located within the replication terminus region. Required for activation of the Xer recombinase, allowing activation of chromosome unlinking by recombination (By similarity).</text>
</comment>
<comment type="subunit">
    <text evidence="1">Homohexamer. Forms a ring that surrounds DNA (By similarity).</text>
</comment>
<comment type="subcellular location">
    <subcellularLocation>
        <location evidence="1">Cell membrane</location>
        <topology evidence="1">Multi-pass membrane protein</topology>
    </subcellularLocation>
    <text evidence="1">Located at the septum.</text>
</comment>
<comment type="domain">
    <text evidence="1">Consists of an N-terminal domain, which is sufficient for the localization to the septal ring and is required for cell division, followed by a linker domain, and a C-terminal domain, which forms the translocation motor involved in chromosome segregation. The C-terminal domain can be further subdivided into alpha, beta and gamma subdomains. The alpha and beta subdomains form the DNA pump, and the gamma subdomain is a regulatory subdomain (By similarity).</text>
</comment>
<comment type="similarity">
    <text evidence="5">Belongs to the FtsK/SpoIIIE/SftA family.</text>
</comment>
<sequence length="795" mass="86622">MARRQATTKKRRTSTRKKKPTVAAKRQMTGNVIGLIGLLVTILALLKVGLVGMVFAEFFRAIAGNAYQIFAGLTLLVMGYLMIFGRWPRLTWRWWVGGNLFFFSYLLLLEIPMFNQLNHHTDFWSLTWNLIKNDFAKGGMASNLGGGLVGAAGYSVTYPLLANVGTILIALILMVASIYITFDLPFHKTMQALRQALMQLGQQLRSGYEWLTHVLRVQIARWRVHQQVRANQAASTEKQPTSTVPQSAAPAETTSGTSAPDSAASAVTSSPADLNITVASDREASPIKSPTSAATVDHEQELQGTEVMDDADYQLPESTLLTKIPKTDQSAEYATIESNSQKLTTTLASFGVQVEVKNVSLGPSVTKYELHPAVGVKVSKVVNLADDLALALAAKDLRIEAPIPGKSLIGIEVPNKQISTVSFRDIVEAQPAHPTKPLAVPLGRDVSGNLVVADLSKMPHLLIAGSTGSGKSVAINVMITGLLMNTKPSQVKFMLIDPKKVELGVYNGIPHLLTPVVTEPKKAARALHKVVAEMERRYELFADSKQRNMQGYNQYIRQQNAADGQSRPVLPYIVVVVDELADLMMVTSSEVEDAIIRLGQMARAAGIHMILATQRPSVDVITGLIKANVPSRMAFAVSSGTDSRTIIDSNGAEKLLGRGDMLYQPMGMNKPLRVQGAYISDHDVEEVVNFIKAQQTADYDDSMLVKDDETDAAGSGDPRDGEDEYYAEAVELVTDQQSASVSMLQRRFRIGYNRAARIVDEMEERGVVGPSEGSKPRKVYRQKSADEAPASGNDA</sequence>
<name>FTSK_LACPL</name>
<organism>
    <name type="scientific">Lactiplantibacillus plantarum (strain ATCC BAA-793 / NCIMB 8826 / WCFS1)</name>
    <name type="common">Lactobacillus plantarum</name>
    <dbReference type="NCBI Taxonomy" id="220668"/>
    <lineage>
        <taxon>Bacteria</taxon>
        <taxon>Bacillati</taxon>
        <taxon>Bacillota</taxon>
        <taxon>Bacilli</taxon>
        <taxon>Lactobacillales</taxon>
        <taxon>Lactobacillaceae</taxon>
        <taxon>Lactiplantibacillus</taxon>
    </lineage>
</organism>
<dbReference type="EMBL" id="AL935263">
    <property type="protein sequence ID" value="CCC79424.1"/>
    <property type="molecule type" value="Genomic_DNA"/>
</dbReference>
<dbReference type="RefSeq" id="WP_003645941.1">
    <property type="nucleotide sequence ID" value="NC_004567.2"/>
</dbReference>
<dbReference type="RefSeq" id="YP_004889938.1">
    <property type="nucleotide sequence ID" value="NC_004567.2"/>
</dbReference>
<dbReference type="SMR" id="Q88V72"/>
<dbReference type="STRING" id="220668.lp_2210"/>
<dbReference type="EnsemblBacteria" id="CCC79424">
    <property type="protein sequence ID" value="CCC79424"/>
    <property type="gene ID" value="lp_2210"/>
</dbReference>
<dbReference type="KEGG" id="lpl:lp_2210"/>
<dbReference type="PATRIC" id="fig|220668.9.peg.1866"/>
<dbReference type="eggNOG" id="COG1674">
    <property type="taxonomic scope" value="Bacteria"/>
</dbReference>
<dbReference type="HOGENOM" id="CLU_001981_9_6_9"/>
<dbReference type="OrthoDB" id="9807790at2"/>
<dbReference type="PhylomeDB" id="Q88V72"/>
<dbReference type="Proteomes" id="UP000000432">
    <property type="component" value="Chromosome"/>
</dbReference>
<dbReference type="GO" id="GO:0005886">
    <property type="term" value="C:plasma membrane"/>
    <property type="evidence" value="ECO:0007669"/>
    <property type="project" value="UniProtKB-SubCell"/>
</dbReference>
<dbReference type="GO" id="GO:0005524">
    <property type="term" value="F:ATP binding"/>
    <property type="evidence" value="ECO:0007669"/>
    <property type="project" value="UniProtKB-KW"/>
</dbReference>
<dbReference type="GO" id="GO:0016887">
    <property type="term" value="F:ATP hydrolysis activity"/>
    <property type="evidence" value="ECO:0007669"/>
    <property type="project" value="InterPro"/>
</dbReference>
<dbReference type="GO" id="GO:0003677">
    <property type="term" value="F:DNA binding"/>
    <property type="evidence" value="ECO:0007669"/>
    <property type="project" value="UniProtKB-KW"/>
</dbReference>
<dbReference type="GO" id="GO:0051301">
    <property type="term" value="P:cell division"/>
    <property type="evidence" value="ECO:0007669"/>
    <property type="project" value="UniProtKB-KW"/>
</dbReference>
<dbReference type="GO" id="GO:0007059">
    <property type="term" value="P:chromosome segregation"/>
    <property type="evidence" value="ECO:0007669"/>
    <property type="project" value="UniProtKB-KW"/>
</dbReference>
<dbReference type="Gene3D" id="3.30.980.40">
    <property type="match status" value="1"/>
</dbReference>
<dbReference type="Gene3D" id="3.40.50.300">
    <property type="entry name" value="P-loop containing nucleotide triphosphate hydrolases"/>
    <property type="match status" value="1"/>
</dbReference>
<dbReference type="Gene3D" id="1.10.10.10">
    <property type="entry name" value="Winged helix-like DNA-binding domain superfamily/Winged helix DNA-binding domain"/>
    <property type="match status" value="1"/>
</dbReference>
<dbReference type="InterPro" id="IPR003593">
    <property type="entry name" value="AAA+_ATPase"/>
</dbReference>
<dbReference type="InterPro" id="IPR050206">
    <property type="entry name" value="FtsK/SpoIIIE/SftA"/>
</dbReference>
<dbReference type="InterPro" id="IPR041027">
    <property type="entry name" value="FtsK_alpha"/>
</dbReference>
<dbReference type="InterPro" id="IPR002543">
    <property type="entry name" value="FtsK_dom"/>
</dbReference>
<dbReference type="InterPro" id="IPR018541">
    <property type="entry name" value="Ftsk_gamma"/>
</dbReference>
<dbReference type="InterPro" id="IPR027417">
    <property type="entry name" value="P-loop_NTPase"/>
</dbReference>
<dbReference type="InterPro" id="IPR036388">
    <property type="entry name" value="WH-like_DNA-bd_sf"/>
</dbReference>
<dbReference type="InterPro" id="IPR036390">
    <property type="entry name" value="WH_DNA-bd_sf"/>
</dbReference>
<dbReference type="PANTHER" id="PTHR22683:SF41">
    <property type="entry name" value="DNA TRANSLOCASE FTSK"/>
    <property type="match status" value="1"/>
</dbReference>
<dbReference type="PANTHER" id="PTHR22683">
    <property type="entry name" value="SPORULATION PROTEIN RELATED"/>
    <property type="match status" value="1"/>
</dbReference>
<dbReference type="Pfam" id="PF17854">
    <property type="entry name" value="FtsK_alpha"/>
    <property type="match status" value="1"/>
</dbReference>
<dbReference type="Pfam" id="PF09397">
    <property type="entry name" value="FtsK_gamma"/>
    <property type="match status" value="1"/>
</dbReference>
<dbReference type="Pfam" id="PF01580">
    <property type="entry name" value="FtsK_SpoIIIE"/>
    <property type="match status" value="1"/>
</dbReference>
<dbReference type="SMART" id="SM00382">
    <property type="entry name" value="AAA"/>
    <property type="match status" value="1"/>
</dbReference>
<dbReference type="SMART" id="SM00843">
    <property type="entry name" value="Ftsk_gamma"/>
    <property type="match status" value="1"/>
</dbReference>
<dbReference type="SUPFAM" id="SSF52540">
    <property type="entry name" value="P-loop containing nucleoside triphosphate hydrolases"/>
    <property type="match status" value="1"/>
</dbReference>
<dbReference type="SUPFAM" id="SSF46785">
    <property type="entry name" value="Winged helix' DNA-binding domain"/>
    <property type="match status" value="1"/>
</dbReference>
<dbReference type="PROSITE" id="PS50901">
    <property type="entry name" value="FTSK"/>
    <property type="match status" value="1"/>
</dbReference>
<evidence type="ECO:0000250" key="1"/>
<evidence type="ECO:0000255" key="2"/>
<evidence type="ECO:0000255" key="3">
    <source>
        <dbReference type="PROSITE-ProRule" id="PRU00289"/>
    </source>
</evidence>
<evidence type="ECO:0000256" key="4">
    <source>
        <dbReference type="SAM" id="MobiDB-lite"/>
    </source>
</evidence>
<evidence type="ECO:0000305" key="5"/>
<protein>
    <recommendedName>
        <fullName>DNA translocase FtsK</fullName>
    </recommendedName>
</protein>
<keyword id="KW-0067">ATP-binding</keyword>
<keyword id="KW-0131">Cell cycle</keyword>
<keyword id="KW-0132">Cell division</keyword>
<keyword id="KW-1003">Cell membrane</keyword>
<keyword id="KW-0159">Chromosome partition</keyword>
<keyword id="KW-0238">DNA-binding</keyword>
<keyword id="KW-0472">Membrane</keyword>
<keyword id="KW-0547">Nucleotide-binding</keyword>
<keyword id="KW-1185">Reference proteome</keyword>
<keyword id="KW-0812">Transmembrane</keyword>
<keyword id="KW-1133">Transmembrane helix</keyword>